<protein>
    <recommendedName>
        <fullName>Transcriptional repressor NF-X1</fullName>
        <ecNumber>2.3.2.-</ecNumber>
    </recommendedName>
    <alternativeName>
        <fullName>Nuclear transcription factor, X box-binding protein 1</fullName>
    </alternativeName>
</protein>
<keyword id="KW-0010">Activator</keyword>
<keyword id="KW-0025">Alternative splicing</keyword>
<keyword id="KW-0238">DNA-binding</keyword>
<keyword id="KW-0945">Host-virus interaction</keyword>
<keyword id="KW-0479">Metal-binding</keyword>
<keyword id="KW-0539">Nucleus</keyword>
<keyword id="KW-0597">Phosphoprotein</keyword>
<keyword id="KW-1267">Proteomics identification</keyword>
<keyword id="KW-1185">Reference proteome</keyword>
<keyword id="KW-0677">Repeat</keyword>
<keyword id="KW-0678">Repressor</keyword>
<keyword id="KW-0804">Transcription</keyword>
<keyword id="KW-0805">Transcription regulation</keyword>
<keyword id="KW-0808">Transferase</keyword>
<keyword id="KW-0832">Ubl conjugation</keyword>
<keyword id="KW-0833">Ubl conjugation pathway</keyword>
<keyword id="KW-0862">Zinc</keyword>
<keyword id="KW-0863">Zinc-finger</keyword>
<gene>
    <name type="primary">NFX1</name>
    <name type="synonym">NFX2</name>
</gene>
<sequence length="1120" mass="124395">MAEAPPVSGTFKFNTDAAEFIPQEKKNSGLNCGTQRRLDSNRIGRRNYSSPPPCHLSRQVPYDEISAVHQHSYHPSGSKPKSQQTSFQSSPCNKSPKSHGLQNQPWQKLRNEKHHIRVKKAQSLAEQTSDTAGLESSTRSESGTDLREHSPSESEKEVVGADPRGAKPKKATQFVYSYGRGPKVKGKLKCEWSNRTTPKPEDAGPESTKPVGVFHPDSSEASSRKGVLDGYGARRNEQRRYPQKRPPWEVEGARPRPGRNPPKQEGHRHTNAGHRNNMGPIPKDDLNERPAKSTCDSENLAVINKSSRRVDQEKCTVRRQDPQVVSPFSRGKQNHVLKNVETHTGSLIEQLTTEKYECMVCCELVRVTAPVWSCQSCYHVFHLNCIKKWARSPASQADGQSGWRCPACQNVSAHVPNTYTCFCGKVKNPEWSRNEIPHSCGEVCRKKQPGQDCPHSCNLLCHPGPCPPCPAFMTKTCECGRTRHTVRCGQAVSVHCSNPCENILNCGQHQCAELCHGGQCQPCQIILNQVCYCGSTSRDVLCGTDVGKSDGFGDFSCLKICGKDLKCGNHTCSQVCHPQPCQQCPRLPQLVRCCPCGQTPLSQLLELGSSSRKTCMDPVPSCGKVCGKPLPCGSLDFIHTCEKLCHEGDCGPCSRTSVISCRCSFRTKELPCTSLKSEDATFMCDKRCNKKRLCGRHKCNEICCVDKEHKCPLICGRKLRCGLHRCEEPCHRGNCQTCWQASFDELTCHCGASVIYPPVPCGTRPPECTQTCARVHECDHPVYHSCHSEEKCPPCTFLTQKWCMGKHEFRSNIPCHLVDISCGLPCSATLPCGMHKCQRLCHKGECLVDEPCKQPCTTPRADCGHPCMAPCHTSSPCPVTACKAKVELQCECGRRKEMVICSEASSTYQRIAAISMASKITDMQLGGSVEISKLITKKEVHQARLECDEECSALERKKRLAEAFHISEDSDPFNIRSSGSKFSDSLKEDARKDLKFVSDVEKEMETLVEAVNKGKNSKKSHSFPPMNRDHRRIIHDLAQVYGLESVSYDSEPKRNVVVTAIRGKSVCPPTTLTGVLEREMQARPPPPIPHHRHQSDKNPGSSNLQKITKEPIIDYFDVQD</sequence>
<comment type="function">
    <text evidence="5 6 7">Binds to the X-box motif of MHC class II genes and represses their expression. May play an important role in regulating the duration of an inflammatory response by limiting the period in which MHC class II molecules are induced by interferon-gamma. Isoform 3 binds to the X-box motif of TERT promoter and represses its expression. Together with PABPC1 or PABPC4, isoform 1 acts as a coactivator for TERT expression. Mediates E2-dependent ubiquitination.</text>
</comment>
<comment type="subunit">
    <text evidence="7">Isoform 1 interacts with PABPC1 and PABPC4.</text>
</comment>
<comment type="subunit">
    <text evidence="6">(Microbial infection) Isoform 1 and isoform 3 interact with human papillomavirus (HPV) type-16 E6 oncoprotein.</text>
</comment>
<comment type="interaction">
    <interactant intactId="EBI-2130062">
        <id>Q12986</id>
    </interactant>
    <interactant intactId="EBI-930964">
        <id>P54253</id>
        <label>ATXN1</label>
    </interactant>
    <organismsDiffer>false</organismsDiffer>
    <experiments>3</experiments>
</comment>
<comment type="interaction">
    <interactant intactId="EBI-2130062">
        <id>Q12986</id>
    </interactant>
    <interactant intactId="EBI-10976677">
        <id>G5E9A7</id>
        <label>DMWD</label>
    </interactant>
    <organismsDiffer>false</organismsDiffer>
    <experiments>3</experiments>
</comment>
<comment type="interaction">
    <interactant intactId="EBI-2130062">
        <id>Q12986</id>
    </interactant>
    <interactant intactId="EBI-744302">
        <id>P14136</id>
        <label>GFAP</label>
    </interactant>
    <organismsDiffer>false</organismsDiffer>
    <experiments>3</experiments>
</comment>
<comment type="interaction">
    <interactant intactId="EBI-2130062">
        <id>Q12986</id>
    </interactant>
    <interactant intactId="EBI-747754">
        <id>P28799</id>
        <label>GRN</label>
    </interactant>
    <organismsDiffer>false</organismsDiffer>
    <experiments>3</experiments>
</comment>
<comment type="interaction">
    <interactant intactId="EBI-2130062">
        <id>Q12986</id>
    </interactant>
    <interactant intactId="EBI-351935">
        <id>P02545</id>
        <label>LMNA</label>
    </interactant>
    <organismsDiffer>false</organismsDiffer>
    <experiments>3</experiments>
</comment>
<comment type="interaction">
    <interactant intactId="EBI-2130062">
        <id>Q12986</id>
    </interactant>
    <interactant intactId="EBI-5235340">
        <id>Q7Z699</id>
        <label>SPRED1</label>
    </interactant>
    <organismsDiffer>false</organismsDiffer>
    <experiments>3</experiments>
</comment>
<comment type="interaction">
    <interactant intactId="EBI-2130062">
        <id>Q12986</id>
    </interactant>
    <interactant intactId="EBI-12806590">
        <id>Q86WV8</id>
        <label>TSC1</label>
    </interactant>
    <organismsDiffer>false</organismsDiffer>
    <experiments>3</experiments>
</comment>
<comment type="subcellular location">
    <subcellularLocation>
        <location>Nucleus</location>
    </subcellularLocation>
</comment>
<comment type="alternative products">
    <event type="alternative splicing"/>
    <isoform>
        <id>Q12986-1</id>
        <name>1</name>
        <name>NFX-123</name>
        <sequence type="displayed"/>
    </isoform>
    <isoform>
        <id>Q12986-2</id>
        <name>2</name>
        <sequence type="described" ref="VSP_033684 VSP_033685"/>
    </isoform>
    <isoform>
        <id>Q12986-3</id>
        <name>3</name>
        <name>NFX-91</name>
        <sequence type="described" ref="VSP_033682 VSP_033683"/>
    </isoform>
</comment>
<comment type="induction">
    <text>By IFNG/IFN-gamma.</text>
</comment>
<comment type="domain">
    <text>The RING-type zinc finger domain interacts with an ubiquitin-conjugating enzyme (E2) and facilitates ubiquitination.</text>
</comment>
<comment type="PTM">
    <text>Isoform 3 is polyubiquitinated in the presence of HPV16 E6 protein; which leads to proteasomal degradation. Isoform 1 is not polyubiquitinated.</text>
</comment>
<comment type="similarity">
    <text evidence="10">Belongs to the NFX1 family.</text>
</comment>
<comment type="sequence caution" evidence="10">
    <conflict type="frameshift">
        <sequence resource="EMBL-CDS" id="AAA69517"/>
    </conflict>
</comment>
<feature type="chain" id="PRO_0000055979" description="Transcriptional repressor NF-X1">
    <location>
        <begin position="1"/>
        <end position="1120"/>
    </location>
</feature>
<feature type="domain" description="R3H" evidence="3">
    <location>
        <begin position="994"/>
        <end position="1062"/>
    </location>
</feature>
<feature type="zinc finger region" description="RING-type; atypical" evidence="2">
    <location>
        <begin position="358"/>
        <end position="409"/>
    </location>
</feature>
<feature type="zinc finger region" description="NF-X1-type 1">
    <location>
        <begin position="453"/>
        <end position="471"/>
    </location>
</feature>
<feature type="zinc finger region" description="NF-X1-type 2">
    <location>
        <begin position="506"/>
        <end position="525"/>
    </location>
</feature>
<feature type="zinc finger region" description="NF-X1-type 3">
    <location>
        <begin position="567"/>
        <end position="586"/>
    </location>
</feature>
<feature type="zinc finger region" description="NF-X1-type 4">
    <location>
        <begin position="632"/>
        <end position="655"/>
    </location>
</feature>
<feature type="zinc finger region" description="NF-X1-type 5">
    <location>
        <begin position="694"/>
        <end position="713"/>
    </location>
</feature>
<feature type="zinc finger region" description="NF-X1-type 6">
    <location>
        <begin position="721"/>
        <end position="740"/>
    </location>
</feature>
<feature type="zinc finger region" description="NF-X1-type 7">
    <location>
        <begin position="832"/>
        <end position="854"/>
    </location>
</feature>
<feature type="zinc finger region" description="NF-X1-type 8">
    <location>
        <begin position="863"/>
        <end position="884"/>
    </location>
</feature>
<feature type="region of interest" description="Interaction with PABPC1 and PABC4" evidence="7">
    <location>
        <begin position="9"/>
        <end position="26"/>
    </location>
</feature>
<feature type="region of interest" description="Disordered" evidence="4">
    <location>
        <begin position="22"/>
        <end position="295"/>
    </location>
</feature>
<feature type="region of interest" description="Disordered" evidence="4">
    <location>
        <begin position="1081"/>
        <end position="1109"/>
    </location>
</feature>
<feature type="compositionally biased region" description="Polar residues" evidence="4">
    <location>
        <begin position="73"/>
        <end position="106"/>
    </location>
</feature>
<feature type="compositionally biased region" description="Basic residues" evidence="4">
    <location>
        <begin position="111"/>
        <end position="120"/>
    </location>
</feature>
<feature type="compositionally biased region" description="Polar residues" evidence="4">
    <location>
        <begin position="124"/>
        <end position="141"/>
    </location>
</feature>
<feature type="compositionally biased region" description="Basic and acidic residues" evidence="4">
    <location>
        <begin position="142"/>
        <end position="159"/>
    </location>
</feature>
<feature type="compositionally biased region" description="Basic and acidic residues" evidence="4">
    <location>
        <begin position="188"/>
        <end position="202"/>
    </location>
</feature>
<feature type="compositionally biased region" description="Basic and acidic residues" evidence="4">
    <location>
        <begin position="222"/>
        <end position="254"/>
    </location>
</feature>
<feature type="compositionally biased region" description="Basic and acidic residues" evidence="4">
    <location>
        <begin position="282"/>
        <end position="291"/>
    </location>
</feature>
<feature type="compositionally biased region" description="Polar residues" evidence="4">
    <location>
        <begin position="1097"/>
        <end position="1106"/>
    </location>
</feature>
<feature type="modified residue" description="Phosphoserine" evidence="11 12">
    <location>
        <position position="50"/>
    </location>
</feature>
<feature type="modified residue" description="Phosphoserine" evidence="1">
    <location>
        <position position="82"/>
    </location>
</feature>
<feature type="modified residue" description="Phosphoserine" evidence="12">
    <location>
        <position position="95"/>
    </location>
</feature>
<feature type="modified residue" description="Phosphoserine" evidence="1">
    <location>
        <position position="129"/>
    </location>
</feature>
<feature type="modified residue" description="Phosphoserine" evidence="12">
    <location>
        <position position="150"/>
    </location>
</feature>
<feature type="modified residue" description="Phosphoserine" evidence="12">
    <location>
        <position position="326"/>
    </location>
</feature>
<feature type="splice variant" id="VSP_033682" description="In isoform 3." evidence="10">
    <original>FRSNIPCHLVDISCGLPCSATLPCG</original>
    <variation>QSHYWASTQKKRSHYMKKIPAHACL</variation>
    <location>
        <begin position="809"/>
        <end position="833"/>
    </location>
</feature>
<feature type="splice variant" id="VSP_033683" description="In isoform 3." evidence="10">
    <location>
        <begin position="834"/>
        <end position="1120"/>
    </location>
</feature>
<feature type="splice variant" id="VSP_033684" description="In isoform 2." evidence="8 9">
    <original>GKNSKKSHSFP</original>
    <variation>VEVETSHWTFL</variation>
    <location>
        <begin position="1014"/>
        <end position="1024"/>
    </location>
</feature>
<feature type="splice variant" id="VSP_033685" description="In isoform 2." evidence="8 9">
    <location>
        <begin position="1025"/>
        <end position="1120"/>
    </location>
</feature>
<feature type="sequence variant" id="VAR_043380" description="In dbSNP:rs5017299.">
    <original>H</original>
    <variation>Y</variation>
    <location>
        <position position="731"/>
    </location>
</feature>
<feature type="sequence variant" id="VAR_043381" description="In dbSNP:rs2860036.">
    <original>P</original>
    <variation>S</variation>
    <location>
        <position position="760"/>
    </location>
</feature>
<feature type="sequence variant" id="VAR_043382" description="In dbSNP:rs2274866.">
    <original>P</original>
    <variation>Q</variation>
    <location>
        <position position="1086"/>
    </location>
</feature>
<feature type="mutagenesis site" description="Reduces PABPC1 and PABC4 binding." evidence="7">
    <original>F</original>
    <variation>A</variation>
    <location>
        <position position="20"/>
    </location>
</feature>
<feature type="sequence conflict" description="In Ref. 1; AAA69517." evidence="10" ref="1">
    <original>G</original>
    <variation>A</variation>
    <location>
        <position position="179"/>
    </location>
</feature>
<feature type="sequence conflict" description="In Ref. 1; AAA69517." evidence="10" ref="1">
    <original>G</original>
    <variation>E</variation>
    <location>
        <position position="186"/>
    </location>
</feature>
<feature type="sequence conflict" description="In Ref. 1; AAA69517." evidence="10" ref="1">
    <original>Q</original>
    <variation>P</variation>
    <location>
        <position position="312"/>
    </location>
</feature>
<feature type="sequence conflict" description="In Ref. 1; AAA69517." evidence="10" ref="1">
    <original>YT</original>
    <variation>FS</variation>
    <location>
        <begin position="419"/>
        <end position="420"/>
    </location>
</feature>
<feature type="sequence conflict" description="In Ref. 1; AAA69517." evidence="10" ref="1">
    <original>I</original>
    <variation>T</variation>
    <location>
        <position position="560"/>
    </location>
</feature>
<feature type="sequence conflict" description="In Ref. 1; AAA69517." evidence="10" ref="1">
    <original>C</original>
    <variation>V</variation>
    <location>
        <position position="653"/>
    </location>
</feature>
<feature type="sequence conflict" description="In Ref. 2; BAF84332." evidence="10" ref="2">
    <original>E</original>
    <variation>EA</variation>
    <location>
        <position position="678"/>
    </location>
</feature>
<feature type="sequence conflict" description="In Ref. 1; AAA69517." evidence="10" ref="1">
    <original>I</original>
    <variation>N</variation>
    <location>
        <position position="714"/>
    </location>
</feature>
<feature type="sequence conflict" description="In Ref. 1; AAA69517." evidence="10" ref="1">
    <original>C</original>
    <variation>G</variation>
    <location>
        <position position="786"/>
    </location>
</feature>
<evidence type="ECO:0000250" key="1">
    <source>
        <dbReference type="UniProtKB" id="B1AY10"/>
    </source>
</evidence>
<evidence type="ECO:0000255" key="2">
    <source>
        <dbReference type="PROSITE-ProRule" id="PRU00175"/>
    </source>
</evidence>
<evidence type="ECO:0000255" key="3">
    <source>
        <dbReference type="PROSITE-ProRule" id="PRU00382"/>
    </source>
</evidence>
<evidence type="ECO:0000256" key="4">
    <source>
        <dbReference type="SAM" id="MobiDB-lite"/>
    </source>
</evidence>
<evidence type="ECO:0000269" key="5">
    <source>
    </source>
</evidence>
<evidence type="ECO:0000269" key="6">
    <source>
    </source>
</evidence>
<evidence type="ECO:0000269" key="7">
    <source>
    </source>
</evidence>
<evidence type="ECO:0000303" key="8">
    <source>
    </source>
</evidence>
<evidence type="ECO:0000303" key="9">
    <source ref="1"/>
</evidence>
<evidence type="ECO:0000305" key="10"/>
<evidence type="ECO:0007744" key="11">
    <source>
    </source>
</evidence>
<evidence type="ECO:0007744" key="12">
    <source>
    </source>
</evidence>
<dbReference type="EC" id="2.3.2.-"/>
<dbReference type="EMBL" id="AF332009">
    <property type="protein sequence ID" value="AAK16545.1"/>
    <property type="molecule type" value="mRNA"/>
</dbReference>
<dbReference type="EMBL" id="AK291643">
    <property type="protein sequence ID" value="BAF84332.1"/>
    <property type="molecule type" value="mRNA"/>
</dbReference>
<dbReference type="EMBL" id="AL356472">
    <property type="status" value="NOT_ANNOTATED_CDS"/>
    <property type="molecule type" value="Genomic_DNA"/>
</dbReference>
<dbReference type="EMBL" id="AL356218">
    <property type="status" value="NOT_ANNOTATED_CDS"/>
    <property type="molecule type" value="Genomic_DNA"/>
</dbReference>
<dbReference type="EMBL" id="CH471071">
    <property type="protein sequence ID" value="EAW58510.1"/>
    <property type="molecule type" value="Genomic_DNA"/>
</dbReference>
<dbReference type="EMBL" id="CH471071">
    <property type="protein sequence ID" value="EAW58511.1"/>
    <property type="molecule type" value="Genomic_DNA"/>
</dbReference>
<dbReference type="EMBL" id="BC012151">
    <property type="protein sequence ID" value="AAH12151.1"/>
    <property type="molecule type" value="mRNA"/>
</dbReference>
<dbReference type="EMBL" id="U15306">
    <property type="protein sequence ID" value="AAA69517.1"/>
    <property type="status" value="ALT_FRAME"/>
    <property type="molecule type" value="mRNA"/>
</dbReference>
<dbReference type="CCDS" id="CCDS6538.1">
    <molecule id="Q12986-1"/>
</dbReference>
<dbReference type="CCDS" id="CCDS6540.1">
    <molecule id="Q12986-3"/>
</dbReference>
<dbReference type="PIR" id="I38869">
    <property type="entry name" value="I38869"/>
</dbReference>
<dbReference type="RefSeq" id="NP_002495.2">
    <molecule id="Q12986-1"/>
    <property type="nucleotide sequence ID" value="NM_002504.5"/>
</dbReference>
<dbReference type="RefSeq" id="NP_667345.1">
    <molecule id="Q12986-3"/>
    <property type="nucleotide sequence ID" value="NM_147134.4"/>
</dbReference>
<dbReference type="SMR" id="Q12986"/>
<dbReference type="BioGRID" id="110865">
    <property type="interactions" value="458"/>
</dbReference>
<dbReference type="ELM" id="Q12986"/>
<dbReference type="FunCoup" id="Q12986">
    <property type="interactions" value="4780"/>
</dbReference>
<dbReference type="IntAct" id="Q12986">
    <property type="interactions" value="34"/>
</dbReference>
<dbReference type="STRING" id="9606.ENSP00000368856"/>
<dbReference type="GlyGen" id="Q12986">
    <property type="glycosylation" value="2 sites, 1 N-linked glycan (1 site), 1 O-linked glycan (1 site)"/>
</dbReference>
<dbReference type="iPTMnet" id="Q12986"/>
<dbReference type="PhosphoSitePlus" id="Q12986"/>
<dbReference type="BioMuta" id="NFX1"/>
<dbReference type="DMDM" id="189047116"/>
<dbReference type="jPOST" id="Q12986"/>
<dbReference type="MassIVE" id="Q12986"/>
<dbReference type="PaxDb" id="9606-ENSP00000368856"/>
<dbReference type="PeptideAtlas" id="Q12986"/>
<dbReference type="ProteomicsDB" id="59082">
    <molecule id="Q12986-1"/>
</dbReference>
<dbReference type="ProteomicsDB" id="59083">
    <molecule id="Q12986-2"/>
</dbReference>
<dbReference type="ProteomicsDB" id="59084">
    <molecule id="Q12986-3"/>
</dbReference>
<dbReference type="Pumba" id="Q12986"/>
<dbReference type="Antibodypedia" id="25201">
    <property type="antibodies" value="146 antibodies from 28 providers"/>
</dbReference>
<dbReference type="DNASU" id="4799"/>
<dbReference type="Ensembl" id="ENST00000318524.6">
    <molecule id="Q12986-3"/>
    <property type="protein sequence ID" value="ENSP00000317695.6"/>
    <property type="gene ID" value="ENSG00000086102.19"/>
</dbReference>
<dbReference type="Ensembl" id="ENST00000379540.8">
    <molecule id="Q12986-1"/>
    <property type="protein sequence ID" value="ENSP00000368856.3"/>
    <property type="gene ID" value="ENSG00000086102.19"/>
</dbReference>
<dbReference type="GeneID" id="4799"/>
<dbReference type="KEGG" id="hsa:4799"/>
<dbReference type="MANE-Select" id="ENST00000379540.8">
    <property type="protein sequence ID" value="ENSP00000368856.3"/>
    <property type="RefSeq nucleotide sequence ID" value="NM_002504.6"/>
    <property type="RefSeq protein sequence ID" value="NP_002495.2"/>
</dbReference>
<dbReference type="UCSC" id="uc003zso.4">
    <molecule id="Q12986-1"/>
    <property type="organism name" value="human"/>
</dbReference>
<dbReference type="AGR" id="HGNC:7803"/>
<dbReference type="CTD" id="4799"/>
<dbReference type="DisGeNET" id="4799"/>
<dbReference type="GeneCards" id="NFX1"/>
<dbReference type="HGNC" id="HGNC:7803">
    <property type="gene designation" value="NFX1"/>
</dbReference>
<dbReference type="HPA" id="ENSG00000086102">
    <property type="expression patterns" value="Low tissue specificity"/>
</dbReference>
<dbReference type="MIM" id="603255">
    <property type="type" value="gene"/>
</dbReference>
<dbReference type="neXtProt" id="NX_Q12986"/>
<dbReference type="OpenTargets" id="ENSG00000086102"/>
<dbReference type="PharmGKB" id="PA31608"/>
<dbReference type="VEuPathDB" id="HostDB:ENSG00000086102"/>
<dbReference type="eggNOG" id="KOG1952">
    <property type="taxonomic scope" value="Eukaryota"/>
</dbReference>
<dbReference type="GeneTree" id="ENSGT00940000156325"/>
<dbReference type="HOGENOM" id="CLU_005714_1_2_1"/>
<dbReference type="InParanoid" id="Q12986"/>
<dbReference type="OMA" id="CPHPCDS"/>
<dbReference type="OrthoDB" id="6512771at2759"/>
<dbReference type="PAN-GO" id="Q12986">
    <property type="GO annotations" value="4 GO annotations based on evolutionary models"/>
</dbReference>
<dbReference type="PhylomeDB" id="Q12986"/>
<dbReference type="TreeFam" id="TF105889"/>
<dbReference type="PathwayCommons" id="Q12986"/>
<dbReference type="SignaLink" id="Q12986"/>
<dbReference type="SIGNOR" id="Q12986"/>
<dbReference type="BioGRID-ORCS" id="4799">
    <property type="hits" value="19 hits in 1177 CRISPR screens"/>
</dbReference>
<dbReference type="CD-CODE" id="232F8A39">
    <property type="entry name" value="P-body"/>
</dbReference>
<dbReference type="CD-CODE" id="DEE660B4">
    <property type="entry name" value="Stress granule"/>
</dbReference>
<dbReference type="ChiTaRS" id="NFX1">
    <property type="organism name" value="human"/>
</dbReference>
<dbReference type="GeneWiki" id="NFX1"/>
<dbReference type="GenomeRNAi" id="4799"/>
<dbReference type="Pharos" id="Q12986">
    <property type="development level" value="Tbio"/>
</dbReference>
<dbReference type="PRO" id="PR:Q12986"/>
<dbReference type="Proteomes" id="UP000005640">
    <property type="component" value="Chromosome 9"/>
</dbReference>
<dbReference type="RNAct" id="Q12986">
    <property type="molecule type" value="protein"/>
</dbReference>
<dbReference type="Bgee" id="ENSG00000086102">
    <property type="expression patterns" value="Expressed in buccal mucosa cell and 192 other cell types or tissues"/>
</dbReference>
<dbReference type="GO" id="GO:0000785">
    <property type="term" value="C:chromatin"/>
    <property type="evidence" value="ECO:0000247"/>
    <property type="project" value="NTNU_SB"/>
</dbReference>
<dbReference type="GO" id="GO:0005829">
    <property type="term" value="C:cytosol"/>
    <property type="evidence" value="ECO:0000314"/>
    <property type="project" value="HPA"/>
</dbReference>
<dbReference type="GO" id="GO:0005730">
    <property type="term" value="C:nucleolus"/>
    <property type="evidence" value="ECO:0000314"/>
    <property type="project" value="HPA"/>
</dbReference>
<dbReference type="GO" id="GO:0005654">
    <property type="term" value="C:nucleoplasm"/>
    <property type="evidence" value="ECO:0000314"/>
    <property type="project" value="HPA"/>
</dbReference>
<dbReference type="GO" id="GO:0005634">
    <property type="term" value="C:nucleus"/>
    <property type="evidence" value="ECO:0000318"/>
    <property type="project" value="GO_Central"/>
</dbReference>
<dbReference type="GO" id="GO:0005886">
    <property type="term" value="C:plasma membrane"/>
    <property type="evidence" value="ECO:0000314"/>
    <property type="project" value="HPA"/>
</dbReference>
<dbReference type="GO" id="GO:0000981">
    <property type="term" value="F:DNA-binding transcription factor activity, RNA polymerase II-specific"/>
    <property type="evidence" value="ECO:0000318"/>
    <property type="project" value="GO_Central"/>
</dbReference>
<dbReference type="GO" id="GO:0001227">
    <property type="term" value="F:DNA-binding transcription repressor activity, RNA polymerase II-specific"/>
    <property type="evidence" value="ECO:0000314"/>
    <property type="project" value="NTNU_SB"/>
</dbReference>
<dbReference type="GO" id="GO:0003723">
    <property type="term" value="F:RNA binding"/>
    <property type="evidence" value="ECO:0007005"/>
    <property type="project" value="UniProtKB"/>
</dbReference>
<dbReference type="GO" id="GO:0000977">
    <property type="term" value="F:RNA polymerase II transcription regulatory region sequence-specific DNA binding"/>
    <property type="evidence" value="ECO:0000314"/>
    <property type="project" value="NTNU_SB"/>
</dbReference>
<dbReference type="GO" id="GO:0061630">
    <property type="term" value="F:ubiquitin protein ligase activity"/>
    <property type="evidence" value="ECO:0000314"/>
    <property type="project" value="ARUK-UCL"/>
</dbReference>
<dbReference type="GO" id="GO:0008270">
    <property type="term" value="F:zinc ion binding"/>
    <property type="evidence" value="ECO:0007669"/>
    <property type="project" value="UniProtKB-KW"/>
</dbReference>
<dbReference type="GO" id="GO:0006954">
    <property type="term" value="P:inflammatory response"/>
    <property type="evidence" value="ECO:0000304"/>
    <property type="project" value="ProtInc"/>
</dbReference>
<dbReference type="GO" id="GO:0045347">
    <property type="term" value="P:negative regulation of MHC class II biosynthetic process"/>
    <property type="evidence" value="ECO:0007669"/>
    <property type="project" value="Ensembl"/>
</dbReference>
<dbReference type="GO" id="GO:0000122">
    <property type="term" value="P:negative regulation of transcription by RNA polymerase II"/>
    <property type="evidence" value="ECO:0000314"/>
    <property type="project" value="NTNU_SB"/>
</dbReference>
<dbReference type="GO" id="GO:0051865">
    <property type="term" value="P:protein autoubiquitination"/>
    <property type="evidence" value="ECO:0000314"/>
    <property type="project" value="ARUK-UCL"/>
</dbReference>
<dbReference type="GO" id="GO:0016567">
    <property type="term" value="P:protein ubiquitination"/>
    <property type="evidence" value="ECO:0000304"/>
    <property type="project" value="ARUK-UCL"/>
</dbReference>
<dbReference type="GO" id="GO:0006366">
    <property type="term" value="P:transcription by RNA polymerase II"/>
    <property type="evidence" value="ECO:0000304"/>
    <property type="project" value="ProtInc"/>
</dbReference>
<dbReference type="CDD" id="cd06008">
    <property type="entry name" value="NF-X1-zinc-finger"/>
    <property type="match status" value="6"/>
</dbReference>
<dbReference type="CDD" id="cd02643">
    <property type="entry name" value="R3H_NF-X1"/>
    <property type="match status" value="1"/>
</dbReference>
<dbReference type="CDD" id="cd16696">
    <property type="entry name" value="RING-CH-C4HC3_NFX1"/>
    <property type="match status" value="1"/>
</dbReference>
<dbReference type="FunFam" id="3.30.1370.50:FF:000003">
    <property type="entry name" value="Transcriptional repressor NF-X1 isoform 1"/>
    <property type="match status" value="1"/>
</dbReference>
<dbReference type="Gene3D" id="3.30.1370.50">
    <property type="entry name" value="R3H-like domain"/>
    <property type="match status" value="1"/>
</dbReference>
<dbReference type="InterPro" id="IPR034078">
    <property type="entry name" value="NFX1_fam"/>
</dbReference>
<dbReference type="InterPro" id="IPR001374">
    <property type="entry name" value="R3H_dom"/>
</dbReference>
<dbReference type="InterPro" id="IPR036867">
    <property type="entry name" value="R3H_dom_sf"/>
</dbReference>
<dbReference type="InterPro" id="IPR034076">
    <property type="entry name" value="R3H_NF-X1"/>
</dbReference>
<dbReference type="InterPro" id="IPR000967">
    <property type="entry name" value="Znf_NFX1"/>
</dbReference>
<dbReference type="InterPro" id="IPR019787">
    <property type="entry name" value="Znf_PHD-finger"/>
</dbReference>
<dbReference type="InterPro" id="IPR001841">
    <property type="entry name" value="Znf_RING"/>
</dbReference>
<dbReference type="PANTHER" id="PTHR12360">
    <property type="entry name" value="NUCLEAR TRANSCRIPTION FACTOR, X-BOX BINDING 1 NFX1"/>
    <property type="match status" value="1"/>
</dbReference>
<dbReference type="PANTHER" id="PTHR12360:SF12">
    <property type="entry name" value="TRANSCRIPTIONAL REPRESSOR NF-X1"/>
    <property type="match status" value="1"/>
</dbReference>
<dbReference type="Pfam" id="PF01424">
    <property type="entry name" value="R3H"/>
    <property type="match status" value="1"/>
</dbReference>
<dbReference type="Pfam" id="PF01422">
    <property type="entry name" value="zf-NF-X1"/>
    <property type="match status" value="8"/>
</dbReference>
<dbReference type="SMART" id="SM00393">
    <property type="entry name" value="R3H"/>
    <property type="match status" value="1"/>
</dbReference>
<dbReference type="SMART" id="SM00184">
    <property type="entry name" value="RING"/>
    <property type="match status" value="1"/>
</dbReference>
<dbReference type="SMART" id="SM00438">
    <property type="entry name" value="ZnF_NFX"/>
    <property type="match status" value="9"/>
</dbReference>
<dbReference type="SUPFAM" id="SSF82708">
    <property type="entry name" value="R3H domain"/>
    <property type="match status" value="1"/>
</dbReference>
<dbReference type="SUPFAM" id="SSF57850">
    <property type="entry name" value="RING/U-box"/>
    <property type="match status" value="1"/>
</dbReference>
<dbReference type="PROSITE" id="PS51061">
    <property type="entry name" value="R3H"/>
    <property type="match status" value="1"/>
</dbReference>
<dbReference type="PROSITE" id="PS50089">
    <property type="entry name" value="ZF_RING_2"/>
    <property type="match status" value="1"/>
</dbReference>
<proteinExistence type="evidence at protein level"/>
<name>NFX1_HUMAN</name>
<reference key="1">
    <citation type="submission" date="2000-12" db="EMBL/GenBank/DDBJ databases">
        <authorList>
            <person name="Li J.M."/>
            <person name="Sah J.H."/>
            <person name="Zhou Z.M."/>
        </authorList>
    </citation>
    <scope>NUCLEOTIDE SEQUENCE [MRNA] (ISOFORM 2)</scope>
    <source>
        <tissue>Testis</tissue>
    </source>
</reference>
<reference key="2">
    <citation type="journal article" date="2004" name="Nat. Genet.">
        <title>Complete sequencing and characterization of 21,243 full-length human cDNAs.</title>
        <authorList>
            <person name="Ota T."/>
            <person name="Suzuki Y."/>
            <person name="Nishikawa T."/>
            <person name="Otsuki T."/>
            <person name="Sugiyama T."/>
            <person name="Irie R."/>
            <person name="Wakamatsu A."/>
            <person name="Hayashi K."/>
            <person name="Sato H."/>
            <person name="Nagai K."/>
            <person name="Kimura K."/>
            <person name="Makita H."/>
            <person name="Sekine M."/>
            <person name="Obayashi M."/>
            <person name="Nishi T."/>
            <person name="Shibahara T."/>
            <person name="Tanaka T."/>
            <person name="Ishii S."/>
            <person name="Yamamoto J."/>
            <person name="Saito K."/>
            <person name="Kawai Y."/>
            <person name="Isono Y."/>
            <person name="Nakamura Y."/>
            <person name="Nagahari K."/>
            <person name="Murakami K."/>
            <person name="Yasuda T."/>
            <person name="Iwayanagi T."/>
            <person name="Wagatsuma M."/>
            <person name="Shiratori A."/>
            <person name="Sudo H."/>
            <person name="Hosoiri T."/>
            <person name="Kaku Y."/>
            <person name="Kodaira H."/>
            <person name="Kondo H."/>
            <person name="Sugawara M."/>
            <person name="Takahashi M."/>
            <person name="Kanda K."/>
            <person name="Yokoi T."/>
            <person name="Furuya T."/>
            <person name="Kikkawa E."/>
            <person name="Omura Y."/>
            <person name="Abe K."/>
            <person name="Kamihara K."/>
            <person name="Katsuta N."/>
            <person name="Sato K."/>
            <person name="Tanikawa M."/>
            <person name="Yamazaki M."/>
            <person name="Ninomiya K."/>
            <person name="Ishibashi T."/>
            <person name="Yamashita H."/>
            <person name="Murakawa K."/>
            <person name="Fujimori K."/>
            <person name="Tanai H."/>
            <person name="Kimata M."/>
            <person name="Watanabe M."/>
            <person name="Hiraoka S."/>
            <person name="Chiba Y."/>
            <person name="Ishida S."/>
            <person name="Ono Y."/>
            <person name="Takiguchi S."/>
            <person name="Watanabe S."/>
            <person name="Yosida M."/>
            <person name="Hotuta T."/>
            <person name="Kusano J."/>
            <person name="Kanehori K."/>
            <person name="Takahashi-Fujii A."/>
            <person name="Hara H."/>
            <person name="Tanase T.-O."/>
            <person name="Nomura Y."/>
            <person name="Togiya S."/>
            <person name="Komai F."/>
            <person name="Hara R."/>
            <person name="Takeuchi K."/>
            <person name="Arita M."/>
            <person name="Imose N."/>
            <person name="Musashino K."/>
            <person name="Yuuki H."/>
            <person name="Oshima A."/>
            <person name="Sasaki N."/>
            <person name="Aotsuka S."/>
            <person name="Yoshikawa Y."/>
            <person name="Matsunawa H."/>
            <person name="Ichihara T."/>
            <person name="Shiohata N."/>
            <person name="Sano S."/>
            <person name="Moriya S."/>
            <person name="Momiyama H."/>
            <person name="Satoh N."/>
            <person name="Takami S."/>
            <person name="Terashima Y."/>
            <person name="Suzuki O."/>
            <person name="Nakagawa S."/>
            <person name="Senoh A."/>
            <person name="Mizoguchi H."/>
            <person name="Goto Y."/>
            <person name="Shimizu F."/>
            <person name="Wakebe H."/>
            <person name="Hishigaki H."/>
            <person name="Watanabe T."/>
            <person name="Sugiyama A."/>
            <person name="Takemoto M."/>
            <person name="Kawakami B."/>
            <person name="Yamazaki M."/>
            <person name="Watanabe K."/>
            <person name="Kumagai A."/>
            <person name="Itakura S."/>
            <person name="Fukuzumi Y."/>
            <person name="Fujimori Y."/>
            <person name="Komiyama M."/>
            <person name="Tashiro H."/>
            <person name="Tanigami A."/>
            <person name="Fujiwara T."/>
            <person name="Ono T."/>
            <person name="Yamada K."/>
            <person name="Fujii Y."/>
            <person name="Ozaki K."/>
            <person name="Hirao M."/>
            <person name="Ohmori Y."/>
            <person name="Kawabata A."/>
            <person name="Hikiji T."/>
            <person name="Kobatake N."/>
            <person name="Inagaki H."/>
            <person name="Ikema Y."/>
            <person name="Okamoto S."/>
            <person name="Okitani R."/>
            <person name="Kawakami T."/>
            <person name="Noguchi S."/>
            <person name="Itoh T."/>
            <person name="Shigeta K."/>
            <person name="Senba T."/>
            <person name="Matsumura K."/>
            <person name="Nakajima Y."/>
            <person name="Mizuno T."/>
            <person name="Morinaga M."/>
            <person name="Sasaki M."/>
            <person name="Togashi T."/>
            <person name="Oyama M."/>
            <person name="Hata H."/>
            <person name="Watanabe M."/>
            <person name="Komatsu T."/>
            <person name="Mizushima-Sugano J."/>
            <person name="Satoh T."/>
            <person name="Shirai Y."/>
            <person name="Takahashi Y."/>
            <person name="Nakagawa K."/>
            <person name="Okumura K."/>
            <person name="Nagase T."/>
            <person name="Nomura N."/>
            <person name="Kikuchi H."/>
            <person name="Masuho Y."/>
            <person name="Yamashita R."/>
            <person name="Nakai K."/>
            <person name="Yada T."/>
            <person name="Nakamura Y."/>
            <person name="Ohara O."/>
            <person name="Isogai T."/>
            <person name="Sugano S."/>
        </authorList>
    </citation>
    <scope>NUCLEOTIDE SEQUENCE [LARGE SCALE MRNA] (ISOFORM 2)</scope>
    <source>
        <tissue>Placenta</tissue>
    </source>
</reference>
<reference key="3">
    <citation type="journal article" date="2004" name="Nature">
        <title>DNA sequence and analysis of human chromosome 9.</title>
        <authorList>
            <person name="Humphray S.J."/>
            <person name="Oliver K."/>
            <person name="Hunt A.R."/>
            <person name="Plumb R.W."/>
            <person name="Loveland J.E."/>
            <person name="Howe K.L."/>
            <person name="Andrews T.D."/>
            <person name="Searle S."/>
            <person name="Hunt S.E."/>
            <person name="Scott C.E."/>
            <person name="Jones M.C."/>
            <person name="Ainscough R."/>
            <person name="Almeida J.P."/>
            <person name="Ambrose K.D."/>
            <person name="Ashwell R.I.S."/>
            <person name="Babbage A.K."/>
            <person name="Babbage S."/>
            <person name="Bagguley C.L."/>
            <person name="Bailey J."/>
            <person name="Banerjee R."/>
            <person name="Barker D.J."/>
            <person name="Barlow K.F."/>
            <person name="Bates K."/>
            <person name="Beasley H."/>
            <person name="Beasley O."/>
            <person name="Bird C.P."/>
            <person name="Bray-Allen S."/>
            <person name="Brown A.J."/>
            <person name="Brown J.Y."/>
            <person name="Burford D."/>
            <person name="Burrill W."/>
            <person name="Burton J."/>
            <person name="Carder C."/>
            <person name="Carter N.P."/>
            <person name="Chapman J.C."/>
            <person name="Chen Y."/>
            <person name="Clarke G."/>
            <person name="Clark S.Y."/>
            <person name="Clee C.M."/>
            <person name="Clegg S."/>
            <person name="Collier R.E."/>
            <person name="Corby N."/>
            <person name="Crosier M."/>
            <person name="Cummings A.T."/>
            <person name="Davies J."/>
            <person name="Dhami P."/>
            <person name="Dunn M."/>
            <person name="Dutta I."/>
            <person name="Dyer L.W."/>
            <person name="Earthrowl M.E."/>
            <person name="Faulkner L."/>
            <person name="Fleming C.J."/>
            <person name="Frankish A."/>
            <person name="Frankland J.A."/>
            <person name="French L."/>
            <person name="Fricker D.G."/>
            <person name="Garner P."/>
            <person name="Garnett J."/>
            <person name="Ghori J."/>
            <person name="Gilbert J.G.R."/>
            <person name="Glison C."/>
            <person name="Grafham D.V."/>
            <person name="Gribble S."/>
            <person name="Griffiths C."/>
            <person name="Griffiths-Jones S."/>
            <person name="Grocock R."/>
            <person name="Guy J."/>
            <person name="Hall R.E."/>
            <person name="Hammond S."/>
            <person name="Harley J.L."/>
            <person name="Harrison E.S.I."/>
            <person name="Hart E.A."/>
            <person name="Heath P.D."/>
            <person name="Henderson C.D."/>
            <person name="Hopkins B.L."/>
            <person name="Howard P.J."/>
            <person name="Howden P.J."/>
            <person name="Huckle E."/>
            <person name="Johnson C."/>
            <person name="Johnson D."/>
            <person name="Joy A.A."/>
            <person name="Kay M."/>
            <person name="Keenan S."/>
            <person name="Kershaw J.K."/>
            <person name="Kimberley A.M."/>
            <person name="King A."/>
            <person name="Knights A."/>
            <person name="Laird G.K."/>
            <person name="Langford C."/>
            <person name="Lawlor S."/>
            <person name="Leongamornlert D.A."/>
            <person name="Leversha M."/>
            <person name="Lloyd C."/>
            <person name="Lloyd D.M."/>
            <person name="Lovell J."/>
            <person name="Martin S."/>
            <person name="Mashreghi-Mohammadi M."/>
            <person name="Matthews L."/>
            <person name="McLaren S."/>
            <person name="McLay K.E."/>
            <person name="McMurray A."/>
            <person name="Milne S."/>
            <person name="Nickerson T."/>
            <person name="Nisbett J."/>
            <person name="Nordsiek G."/>
            <person name="Pearce A.V."/>
            <person name="Peck A.I."/>
            <person name="Porter K.M."/>
            <person name="Pandian R."/>
            <person name="Pelan S."/>
            <person name="Phillimore B."/>
            <person name="Povey S."/>
            <person name="Ramsey Y."/>
            <person name="Rand V."/>
            <person name="Scharfe M."/>
            <person name="Sehra H.K."/>
            <person name="Shownkeen R."/>
            <person name="Sims S.K."/>
            <person name="Skuce C.D."/>
            <person name="Smith M."/>
            <person name="Steward C.A."/>
            <person name="Swarbreck D."/>
            <person name="Sycamore N."/>
            <person name="Tester J."/>
            <person name="Thorpe A."/>
            <person name="Tracey A."/>
            <person name="Tromans A."/>
            <person name="Thomas D.W."/>
            <person name="Wall M."/>
            <person name="Wallis J.M."/>
            <person name="West A.P."/>
            <person name="Whitehead S.L."/>
            <person name="Willey D.L."/>
            <person name="Williams S.A."/>
            <person name="Wilming L."/>
            <person name="Wray P.W."/>
            <person name="Young L."/>
            <person name="Ashurst J.L."/>
            <person name="Coulson A."/>
            <person name="Blocker H."/>
            <person name="Durbin R.M."/>
            <person name="Sulston J.E."/>
            <person name="Hubbard T."/>
            <person name="Jackson M.J."/>
            <person name="Bentley D.R."/>
            <person name="Beck S."/>
            <person name="Rogers J."/>
            <person name="Dunham I."/>
        </authorList>
    </citation>
    <scope>NUCLEOTIDE SEQUENCE [LARGE SCALE GENOMIC DNA]</scope>
</reference>
<reference key="4">
    <citation type="submission" date="2005-09" db="EMBL/GenBank/DDBJ databases">
        <authorList>
            <person name="Mural R.J."/>
            <person name="Istrail S."/>
            <person name="Sutton G.G."/>
            <person name="Florea L."/>
            <person name="Halpern A.L."/>
            <person name="Mobarry C.M."/>
            <person name="Lippert R."/>
            <person name="Walenz B."/>
            <person name="Shatkay H."/>
            <person name="Dew I."/>
            <person name="Miller J.R."/>
            <person name="Flanigan M.J."/>
            <person name="Edwards N.J."/>
            <person name="Bolanos R."/>
            <person name="Fasulo D."/>
            <person name="Halldorsson B.V."/>
            <person name="Hannenhalli S."/>
            <person name="Turner R."/>
            <person name="Yooseph S."/>
            <person name="Lu F."/>
            <person name="Nusskern D.R."/>
            <person name="Shue B.C."/>
            <person name="Zheng X.H."/>
            <person name="Zhong F."/>
            <person name="Delcher A.L."/>
            <person name="Huson D.H."/>
            <person name="Kravitz S.A."/>
            <person name="Mouchard L."/>
            <person name="Reinert K."/>
            <person name="Remington K.A."/>
            <person name="Clark A.G."/>
            <person name="Waterman M.S."/>
            <person name="Eichler E.E."/>
            <person name="Adams M.D."/>
            <person name="Hunkapiller M.W."/>
            <person name="Myers E.W."/>
            <person name="Venter J.C."/>
        </authorList>
    </citation>
    <scope>NUCLEOTIDE SEQUENCE [LARGE SCALE GENOMIC DNA]</scope>
</reference>
<reference key="5">
    <citation type="journal article" date="2004" name="Genome Res.">
        <title>The status, quality, and expansion of the NIH full-length cDNA project: the Mammalian Gene Collection (MGC).</title>
        <authorList>
            <consortium name="The MGC Project Team"/>
        </authorList>
    </citation>
    <scope>NUCLEOTIDE SEQUENCE [LARGE SCALE MRNA] (ISOFORM 1)</scope>
    <source>
        <tissue>Eye</tissue>
    </source>
</reference>
<reference key="6">
    <citation type="journal article" date="1994" name="J. Exp. Med.">
        <title>A novel cysteine-rich sequence-specific DNA-binding protein interacts with the conserved X-box motif of the human major histocompatibility complex class II genes via a repeated Cys-His domain and functions as a transcriptional repressor.</title>
        <authorList>
            <person name="Song Z."/>
            <person name="Krishna S."/>
            <person name="Thanos D."/>
            <person name="Strominger J.L."/>
            <person name="Ono S.J."/>
        </authorList>
    </citation>
    <scope>NUCLEOTIDE SEQUENCE [MRNA] OF 48-1120 (ISOFORM 1)</scope>
</reference>
<reference key="7">
    <citation type="journal article" date="1999" name="Proc. Natl. Acad. Sci. U.S.A.">
        <title>RING fingers mediate ubiquitin-conjugating enzyme (E2)-dependent ubiquitination.</title>
        <authorList>
            <person name="Lorick K.L."/>
            <person name="Jensen J.P."/>
            <person name="Fang S."/>
            <person name="Ong A.M."/>
            <person name="Hatakeyama S."/>
            <person name="Weissman A.M."/>
        </authorList>
    </citation>
    <scope>FUNCTION AS AN E2-DEPENDENT UBIQUITIN-PROTEIN LIGASE</scope>
</reference>
<reference key="8">
    <citation type="journal article" date="2004" name="Genes Dev.">
        <title>Identification of a novel telomerase repressor that interacts with the human papillomavirus type-16 E6/E6-AP complex.</title>
        <authorList>
            <person name="Gewin L."/>
            <person name="Myers H."/>
            <person name="Kiyono T."/>
            <person name="Galloway D.A."/>
        </authorList>
    </citation>
    <scope>INTERACTION WITH HPV16 E6 (MICROBIAL INFECTION)</scope>
    <scope>FUNCTION</scope>
</reference>
<reference key="9">
    <citation type="journal article" date="2007" name="J. Virol.">
        <title>NFX1-123 and poly(A) binding proteins synergistically augment activation of telomerase in human papillomavirus type 16 E6-expressing cells.</title>
        <authorList>
            <person name="Katzenellenbogen R.A."/>
            <person name="Egelkrout E.M."/>
            <person name="Vliet-Gregg P."/>
            <person name="Gewin L.C."/>
            <person name="Gafken P.R."/>
            <person name="Galloway D.A."/>
        </authorList>
    </citation>
    <scope>FUNCTION</scope>
    <scope>INTERACTION WITH PABPC1 AND PABPC4</scope>
    <scope>MUTAGENESIS OF PHE-20</scope>
</reference>
<reference key="10">
    <citation type="journal article" date="2008" name="J. Proteome Res.">
        <title>Combining protein-based IMAC, peptide-based IMAC, and MudPIT for efficient phosphoproteomic analysis.</title>
        <authorList>
            <person name="Cantin G.T."/>
            <person name="Yi W."/>
            <person name="Lu B."/>
            <person name="Park S.K."/>
            <person name="Xu T."/>
            <person name="Lee J.-D."/>
            <person name="Yates J.R. III"/>
        </authorList>
    </citation>
    <scope>IDENTIFICATION BY MASS SPECTROMETRY [LARGE SCALE ANALYSIS]</scope>
    <source>
        <tissue>Cervix carcinoma</tissue>
    </source>
</reference>
<reference key="11">
    <citation type="journal article" date="2008" name="Proc. Natl. Acad. Sci. U.S.A.">
        <title>A quantitative atlas of mitotic phosphorylation.</title>
        <authorList>
            <person name="Dephoure N."/>
            <person name="Zhou C."/>
            <person name="Villen J."/>
            <person name="Beausoleil S.A."/>
            <person name="Bakalarski C.E."/>
            <person name="Elledge S.J."/>
            <person name="Gygi S.P."/>
        </authorList>
    </citation>
    <scope>PHOSPHORYLATION [LARGE SCALE ANALYSIS] AT SER-50</scope>
    <scope>IDENTIFICATION BY MASS SPECTROMETRY [LARGE SCALE ANALYSIS]</scope>
    <source>
        <tissue>Cervix carcinoma</tissue>
    </source>
</reference>
<reference key="12">
    <citation type="journal article" date="2009" name="Anal. Chem.">
        <title>Lys-N and trypsin cover complementary parts of the phosphoproteome in a refined SCX-based approach.</title>
        <authorList>
            <person name="Gauci S."/>
            <person name="Helbig A.O."/>
            <person name="Slijper M."/>
            <person name="Krijgsveld J."/>
            <person name="Heck A.J."/>
            <person name="Mohammed S."/>
        </authorList>
    </citation>
    <scope>IDENTIFICATION BY MASS SPECTROMETRY [LARGE SCALE ANALYSIS]</scope>
</reference>
<reference key="13">
    <citation type="journal article" date="2009" name="Mol. Cell. Proteomics">
        <title>Large-scale proteomics analysis of the human kinome.</title>
        <authorList>
            <person name="Oppermann F.S."/>
            <person name="Gnad F."/>
            <person name="Olsen J.V."/>
            <person name="Hornberger R."/>
            <person name="Greff Z."/>
            <person name="Keri G."/>
            <person name="Mann M."/>
            <person name="Daub H."/>
        </authorList>
    </citation>
    <scope>IDENTIFICATION BY MASS SPECTROMETRY [LARGE SCALE ANALYSIS]</scope>
</reference>
<reference key="14">
    <citation type="journal article" date="2010" name="Sci. Signal.">
        <title>Quantitative phosphoproteomics reveals widespread full phosphorylation site occupancy during mitosis.</title>
        <authorList>
            <person name="Olsen J.V."/>
            <person name="Vermeulen M."/>
            <person name="Santamaria A."/>
            <person name="Kumar C."/>
            <person name="Miller M.L."/>
            <person name="Jensen L.J."/>
            <person name="Gnad F."/>
            <person name="Cox J."/>
            <person name="Jensen T.S."/>
            <person name="Nigg E.A."/>
            <person name="Brunak S."/>
            <person name="Mann M."/>
        </authorList>
    </citation>
    <scope>IDENTIFICATION BY MASS SPECTROMETRY [LARGE SCALE ANALYSIS]</scope>
    <source>
        <tissue>Cervix carcinoma</tissue>
    </source>
</reference>
<reference key="15">
    <citation type="journal article" date="2013" name="J. Proteome Res.">
        <title>Toward a comprehensive characterization of a human cancer cell phosphoproteome.</title>
        <authorList>
            <person name="Zhou H."/>
            <person name="Di Palma S."/>
            <person name="Preisinger C."/>
            <person name="Peng M."/>
            <person name="Polat A.N."/>
            <person name="Heck A.J."/>
            <person name="Mohammed S."/>
        </authorList>
    </citation>
    <scope>PHOSPHORYLATION [LARGE SCALE ANALYSIS] AT SER-50; SER-95; SER-150 AND SER-326</scope>
    <scope>IDENTIFICATION BY MASS SPECTROMETRY [LARGE SCALE ANALYSIS]</scope>
    <source>
        <tissue>Cervix carcinoma</tissue>
        <tissue>Erythroleukemia</tissue>
    </source>
</reference>
<organism>
    <name type="scientific">Homo sapiens</name>
    <name type="common">Human</name>
    <dbReference type="NCBI Taxonomy" id="9606"/>
    <lineage>
        <taxon>Eukaryota</taxon>
        <taxon>Metazoa</taxon>
        <taxon>Chordata</taxon>
        <taxon>Craniata</taxon>
        <taxon>Vertebrata</taxon>
        <taxon>Euteleostomi</taxon>
        <taxon>Mammalia</taxon>
        <taxon>Eutheria</taxon>
        <taxon>Euarchontoglires</taxon>
        <taxon>Primates</taxon>
        <taxon>Haplorrhini</taxon>
        <taxon>Catarrhini</taxon>
        <taxon>Hominidae</taxon>
        <taxon>Homo</taxon>
    </lineage>
</organism>
<accession>Q12986</accession>
<accession>A8K6H8</accession>
<accession>Q5VXW6</accession>
<accession>Q96EL5</accession>
<accession>Q9BXI1</accession>